<gene>
    <name type="primary">mco</name>
</gene>
<accession>Q69HT9</accession>
<proteinExistence type="evidence at protein level"/>
<feature type="chain" id="PRO_0000336995" description="Multicopper oxidase mco">
    <location>
        <begin position="1"/>
        <end position="447"/>
    </location>
</feature>
<feature type="region of interest" description="Disordered" evidence="2">
    <location>
        <begin position="1"/>
        <end position="43"/>
    </location>
</feature>
<feature type="compositionally biased region" description="Basic and acidic residues" evidence="2">
    <location>
        <begin position="1"/>
        <end position="25"/>
    </location>
</feature>
<feature type="binding site" description="type 2 copper site" evidence="1">
    <location>
        <position position="107"/>
    </location>
    <ligand>
        <name>Cu cation</name>
        <dbReference type="ChEBI" id="CHEBI:23378"/>
        <label>1</label>
    </ligand>
</feature>
<feature type="binding site" description="type 3 copper site" evidence="1">
    <location>
        <position position="109"/>
    </location>
    <ligand>
        <name>Cu cation</name>
        <dbReference type="ChEBI" id="CHEBI:23378"/>
        <label>2</label>
    </ligand>
</feature>
<feature type="binding site" description="type 3 copper site" evidence="1">
    <location>
        <position position="147"/>
    </location>
    <ligand>
        <name>Cu cation</name>
        <dbReference type="ChEBI" id="CHEBI:23378"/>
        <label>2</label>
    </ligand>
</feature>
<feature type="binding site" description="type 3 copper site" evidence="1">
    <location>
        <position position="149"/>
    </location>
    <ligand>
        <name>Cu cation</name>
        <dbReference type="ChEBI" id="CHEBI:23378"/>
        <label>3</label>
    </ligand>
</feature>
<feature type="binding site" description="type 1 copper site" evidence="1">
    <location>
        <position position="375"/>
    </location>
    <ligand>
        <name>Cu cation</name>
        <dbReference type="ChEBI" id="CHEBI:23378"/>
        <label>4</label>
    </ligand>
</feature>
<feature type="binding site" description="type 2 copper site" evidence="1">
    <location>
        <position position="378"/>
    </location>
    <ligand>
        <name>Cu cation</name>
        <dbReference type="ChEBI" id="CHEBI:23378"/>
        <label>1</label>
    </ligand>
</feature>
<feature type="binding site" description="type 3 copper site" evidence="1">
    <location>
        <position position="380"/>
    </location>
    <ligand>
        <name>Cu cation</name>
        <dbReference type="ChEBI" id="CHEBI:23378"/>
        <label>3</label>
    </ligand>
</feature>
<feature type="binding site" description="type 3 copper site" evidence="1">
    <location>
        <position position="428"/>
    </location>
    <ligand>
        <name>Cu cation</name>
        <dbReference type="ChEBI" id="CHEBI:23378"/>
        <label>3</label>
    </ligand>
</feature>
<feature type="binding site" description="type 1 copper site" evidence="1">
    <location>
        <position position="429"/>
    </location>
    <ligand>
        <name>Cu cation</name>
        <dbReference type="ChEBI" id="CHEBI:23378"/>
        <label>4</label>
    </ligand>
</feature>
<feature type="binding site" description="type 3 copper site" evidence="1">
    <location>
        <position position="430"/>
    </location>
    <ligand>
        <name>Cu cation</name>
        <dbReference type="ChEBI" id="CHEBI:23378"/>
        <label>2</label>
    </ligand>
</feature>
<feature type="binding site" description="type 1 copper site" evidence="1">
    <location>
        <position position="434"/>
    </location>
    <ligand>
        <name>Cu cation</name>
        <dbReference type="ChEBI" id="CHEBI:23378"/>
        <label>4</label>
    </ligand>
</feature>
<feature type="binding site" description="type 1 copper site" evidence="1">
    <location>
        <position position="439"/>
    </location>
    <ligand>
        <name>Cu cation</name>
        <dbReference type="ChEBI" id="CHEBI:23378"/>
        <label>4</label>
    </ligand>
</feature>
<comment type="function">
    <text evidence="3">May be involved in copper homeostasis and oxidative stress response. Oxidizes the substrate 3,3'-dimethoxybenzidine in vitro. Also possesses low levels of phenoloxidase and ferroxidase activities.</text>
</comment>
<comment type="cofactor">
    <cofactor evidence="1">
        <name>Cu cation</name>
        <dbReference type="ChEBI" id="CHEBI:23378"/>
    </cofactor>
    <text evidence="1">Binds 4 Cu cations per monomer.</text>
</comment>
<comment type="subcellular location">
    <subcellularLocation>
        <location evidence="4">Cytoplasm</location>
    </subcellularLocation>
</comment>
<comment type="induction">
    <text evidence="3">Induced by copper.</text>
</comment>
<comment type="similarity">
    <text evidence="4">Belongs to the multicopper oxidase family.</text>
</comment>
<comment type="sequence caution" evidence="4">
    <conflict type="erroneous initiation">
        <sequence resource="EMBL-CDS" id="AAQ17236"/>
    </conflict>
</comment>
<organism>
    <name type="scientific">Staphylococcus aureus</name>
    <dbReference type="NCBI Taxonomy" id="1280"/>
    <lineage>
        <taxon>Bacteria</taxon>
        <taxon>Bacillati</taxon>
        <taxon>Bacillota</taxon>
        <taxon>Bacilli</taxon>
        <taxon>Bacillales</taxon>
        <taxon>Staphylococcaceae</taxon>
        <taxon>Staphylococcus</taxon>
    </lineage>
</organism>
<sequence length="447" mass="50840">MMDMKENDQKRNDMMDMKSHDERKNLNSSQGKNEITFPKVLDPKKDNNGYKSYTLKAQKGKTEFYKGNFSNTLGYNGNLLGPTLKLKKGDKVKIKLVNNLDENTTFHWHGLEIDGKVDGGPSQVIKPGKEKTIKFEVKQEAATLWYHPHPSPNTAKQVYNGLSGLLYIEDDKKNNYPSNYGKNDLPIIIQDKTFVSKKLNYTKTKDEDGTQGDTVLVNGKVDPKLTTKEGKIRLRLLNGSNARDLNLKLSNNQSFEYIASEGGHLEKTKKLKEINLAPSARKEIVIDLSKMKEDKVNLVDNDETVILPIINKEKSTNKDTTPKVDKKIKLEGMDDNVTINGKKFDPNRIDFTQKVNRKETWEIENVKDKMSGMKHPFHIHGTQFKVLSVDGKKPSEDMRGKKDVISLEPGQKAKIEVVFKNTGTYMFHCHILEHEDNGMMGQIKVTK</sequence>
<name>MCO_STAAU</name>
<reference key="1">
    <citation type="journal article" date="2005" name="Appl. Environ. Microbiol.">
        <title>Characterization of a multicopper oxidase gene from Staphylococcus aureus.</title>
        <authorList>
            <person name="Sitthisak S."/>
            <person name="Howieson K."/>
            <person name="Amezola C."/>
            <person name="Jayaswal R.K."/>
        </authorList>
    </citation>
    <scope>NUCLEOTIDE SEQUENCE [GENOMIC DNA]</scope>
    <scope>FUNCTION AS A MULTICOPPER OXIDASE</scope>
    <scope>COFACTOR</scope>
    <scope>INDUCTION BY COPPER</scope>
    <source>
        <strain>ATCC 12600 / DSM 20231 / IAM 12544 / NCDO 949 / NCTC 8532</strain>
    </source>
</reference>
<keyword id="KW-0186">Copper</keyword>
<keyword id="KW-0963">Cytoplasm</keyword>
<keyword id="KW-0479">Metal-binding</keyword>
<keyword id="KW-0560">Oxidoreductase</keyword>
<evidence type="ECO:0000250" key="1"/>
<evidence type="ECO:0000256" key="2">
    <source>
        <dbReference type="SAM" id="MobiDB-lite"/>
    </source>
</evidence>
<evidence type="ECO:0000269" key="3">
    <source>
    </source>
</evidence>
<evidence type="ECO:0000305" key="4"/>
<protein>
    <recommendedName>
        <fullName>Multicopper oxidase mco</fullName>
        <ecNumber>1.-.-.-</ecNumber>
    </recommendedName>
</protein>
<dbReference type="EC" id="1.-.-.-"/>
<dbReference type="EMBL" id="AY259130">
    <property type="protein sequence ID" value="AAQ17236.1"/>
    <property type="status" value="ALT_INIT"/>
    <property type="molecule type" value="Genomic_DNA"/>
</dbReference>
<dbReference type="SMR" id="Q69HT9"/>
<dbReference type="GO" id="GO:0005737">
    <property type="term" value="C:cytoplasm"/>
    <property type="evidence" value="ECO:0007669"/>
    <property type="project" value="UniProtKB-SubCell"/>
</dbReference>
<dbReference type="GO" id="GO:0005507">
    <property type="term" value="F:copper ion binding"/>
    <property type="evidence" value="ECO:0007669"/>
    <property type="project" value="InterPro"/>
</dbReference>
<dbReference type="GO" id="GO:0016491">
    <property type="term" value="F:oxidoreductase activity"/>
    <property type="evidence" value="ECO:0007669"/>
    <property type="project" value="UniProtKB-KW"/>
</dbReference>
<dbReference type="CDD" id="cd04232">
    <property type="entry name" value="CuRO_1_CueO_FtsP"/>
    <property type="match status" value="1"/>
</dbReference>
<dbReference type="CDD" id="cd13890">
    <property type="entry name" value="CuRO_3_CueO_FtsP"/>
    <property type="match status" value="1"/>
</dbReference>
<dbReference type="Gene3D" id="2.60.40.420">
    <property type="entry name" value="Cupredoxins - blue copper proteins"/>
    <property type="match status" value="3"/>
</dbReference>
<dbReference type="InterPro" id="IPR011707">
    <property type="entry name" value="Cu-oxidase-like_N"/>
</dbReference>
<dbReference type="InterPro" id="IPR011706">
    <property type="entry name" value="Cu-oxidase_C"/>
</dbReference>
<dbReference type="InterPro" id="IPR045087">
    <property type="entry name" value="Cu-oxidase_fam"/>
</dbReference>
<dbReference type="InterPro" id="IPR033138">
    <property type="entry name" value="Cu_oxidase_CS"/>
</dbReference>
<dbReference type="InterPro" id="IPR002355">
    <property type="entry name" value="Cu_oxidase_Cu_BS"/>
</dbReference>
<dbReference type="InterPro" id="IPR008972">
    <property type="entry name" value="Cupredoxin"/>
</dbReference>
<dbReference type="PANTHER" id="PTHR48267:SF1">
    <property type="entry name" value="BILIRUBIN OXIDASE"/>
    <property type="match status" value="1"/>
</dbReference>
<dbReference type="PANTHER" id="PTHR48267">
    <property type="entry name" value="CUPREDOXIN SUPERFAMILY PROTEIN"/>
    <property type="match status" value="1"/>
</dbReference>
<dbReference type="Pfam" id="PF07731">
    <property type="entry name" value="Cu-oxidase_2"/>
    <property type="match status" value="1"/>
</dbReference>
<dbReference type="Pfam" id="PF07732">
    <property type="entry name" value="Cu-oxidase_3"/>
    <property type="match status" value="1"/>
</dbReference>
<dbReference type="SUPFAM" id="SSF49503">
    <property type="entry name" value="Cupredoxins"/>
    <property type="match status" value="3"/>
</dbReference>
<dbReference type="PROSITE" id="PS00079">
    <property type="entry name" value="MULTICOPPER_OXIDASE1"/>
    <property type="match status" value="1"/>
</dbReference>
<dbReference type="PROSITE" id="PS00080">
    <property type="entry name" value="MULTICOPPER_OXIDASE2"/>
    <property type="match status" value="1"/>
</dbReference>